<feature type="chain" id="PRO_0000264581" description="Phosphoribosylformylglycinamidine synthase">
    <location>
        <begin position="1"/>
        <end position="1299"/>
    </location>
</feature>
<feature type="domain" description="Glutamine amidotransferase type-1" evidence="1">
    <location>
        <begin position="1046"/>
        <end position="1299"/>
    </location>
</feature>
<feature type="active site" description="Nucleophile" evidence="1">
    <location>
        <position position="1139"/>
    </location>
</feature>
<feature type="active site" evidence="1">
    <location>
        <position position="1264"/>
    </location>
</feature>
<feature type="active site" evidence="1">
    <location>
        <position position="1266"/>
    </location>
</feature>
<feature type="binding site" evidence="1">
    <location>
        <begin position="310"/>
        <end position="321"/>
    </location>
    <ligand>
        <name>ATP</name>
        <dbReference type="ChEBI" id="CHEBI:30616"/>
    </ligand>
</feature>
<feature type="binding site" evidence="1">
    <location>
        <begin position="389"/>
        <end position="391"/>
    </location>
    <ligand>
        <name>ATP</name>
        <dbReference type="ChEBI" id="CHEBI:30616"/>
    </ligand>
</feature>
<feature type="binding site" evidence="1">
    <location>
        <position position="680"/>
    </location>
    <ligand>
        <name>ATP</name>
        <dbReference type="ChEBI" id="CHEBI:30616"/>
    </ligand>
</feature>
<feature type="binding site" evidence="1">
    <location>
        <position position="681"/>
    </location>
    <ligand>
        <name>Mg(2+)</name>
        <dbReference type="ChEBI" id="CHEBI:18420"/>
    </ligand>
</feature>
<feature type="binding site" evidence="1">
    <location>
        <position position="720"/>
    </location>
    <ligand>
        <name>Mg(2+)</name>
        <dbReference type="ChEBI" id="CHEBI:18420"/>
    </ligand>
</feature>
<feature type="binding site" evidence="1">
    <location>
        <position position="724"/>
    </location>
    <ligand>
        <name>Mg(2+)</name>
        <dbReference type="ChEBI" id="CHEBI:18420"/>
    </ligand>
</feature>
<feature type="binding site" evidence="1">
    <location>
        <position position="888"/>
    </location>
    <ligand>
        <name>Mg(2+)</name>
        <dbReference type="ChEBI" id="CHEBI:18420"/>
    </ligand>
</feature>
<feature type="binding site" evidence="1">
    <location>
        <position position="890"/>
    </location>
    <ligand>
        <name>ATP</name>
        <dbReference type="ChEBI" id="CHEBI:30616"/>
    </ligand>
</feature>
<organism>
    <name type="scientific">Myxococcus xanthus (strain DK1622)</name>
    <dbReference type="NCBI Taxonomy" id="246197"/>
    <lineage>
        <taxon>Bacteria</taxon>
        <taxon>Pseudomonadati</taxon>
        <taxon>Myxococcota</taxon>
        <taxon>Myxococcia</taxon>
        <taxon>Myxococcales</taxon>
        <taxon>Cystobacterineae</taxon>
        <taxon>Myxococcaceae</taxon>
        <taxon>Myxococcus</taxon>
    </lineage>
</organism>
<comment type="function">
    <text evidence="1">Phosphoribosylformylglycinamidine synthase involved in the purines biosynthetic pathway. Catalyzes the ATP-dependent conversion of formylglycinamide ribonucleotide (FGAR) and glutamine to yield formylglycinamidine ribonucleotide (FGAM) and glutamate.</text>
</comment>
<comment type="catalytic activity">
    <reaction evidence="1">
        <text>N(2)-formyl-N(1)-(5-phospho-beta-D-ribosyl)glycinamide + L-glutamine + ATP + H2O = 2-formamido-N(1)-(5-O-phospho-beta-D-ribosyl)acetamidine + L-glutamate + ADP + phosphate + H(+)</text>
        <dbReference type="Rhea" id="RHEA:17129"/>
        <dbReference type="ChEBI" id="CHEBI:15377"/>
        <dbReference type="ChEBI" id="CHEBI:15378"/>
        <dbReference type="ChEBI" id="CHEBI:29985"/>
        <dbReference type="ChEBI" id="CHEBI:30616"/>
        <dbReference type="ChEBI" id="CHEBI:43474"/>
        <dbReference type="ChEBI" id="CHEBI:58359"/>
        <dbReference type="ChEBI" id="CHEBI:147286"/>
        <dbReference type="ChEBI" id="CHEBI:147287"/>
        <dbReference type="ChEBI" id="CHEBI:456216"/>
        <dbReference type="EC" id="6.3.5.3"/>
    </reaction>
</comment>
<comment type="pathway">
    <text evidence="1">Purine metabolism; IMP biosynthesis via de novo pathway; 5-amino-1-(5-phospho-D-ribosyl)imidazole from N(2)-formyl-N(1)-(5-phospho-D-ribosyl)glycinamide: step 1/2.</text>
</comment>
<comment type="subunit">
    <text evidence="1">Monomer.</text>
</comment>
<comment type="subcellular location">
    <subcellularLocation>
        <location evidence="1">Cytoplasm</location>
    </subcellularLocation>
</comment>
<comment type="similarity">
    <text evidence="1">In the N-terminal section; belongs to the FGAMS family.</text>
</comment>
<comment type="sequence caution" evidence="2">
    <conflict type="erroneous initiation">
        <sequence resource="EMBL-CDS" id="ABF92728"/>
    </conflict>
    <text>Extended N-terminus.</text>
</comment>
<protein>
    <recommendedName>
        <fullName evidence="1">Phosphoribosylformylglycinamidine synthase</fullName>
        <shortName evidence="1">FGAM synthase</shortName>
        <shortName evidence="1">FGAMS</shortName>
        <ecNumber evidence="1">6.3.5.3</ecNumber>
    </recommendedName>
    <alternativeName>
        <fullName evidence="1">Formylglycinamide ribonucleotide amidotransferase</fullName>
        <shortName evidence="1">FGAR amidotransferase</shortName>
        <shortName evidence="1">FGAR-AT</shortName>
    </alternativeName>
</protein>
<dbReference type="EC" id="6.3.5.3" evidence="1"/>
<dbReference type="EMBL" id="CP000113">
    <property type="protein sequence ID" value="ABF92728.1"/>
    <property type="status" value="ALT_INIT"/>
    <property type="molecule type" value="Genomic_DNA"/>
</dbReference>
<dbReference type="SMR" id="Q1D9V4"/>
<dbReference type="STRING" id="246197.MXAN_2349"/>
<dbReference type="MEROPS" id="C56.972"/>
<dbReference type="EnsemblBacteria" id="ABF92728">
    <property type="protein sequence ID" value="ABF92728"/>
    <property type="gene ID" value="MXAN_2349"/>
</dbReference>
<dbReference type="KEGG" id="mxa:MXAN_2349"/>
<dbReference type="eggNOG" id="COG0046">
    <property type="taxonomic scope" value="Bacteria"/>
</dbReference>
<dbReference type="eggNOG" id="COG0047">
    <property type="taxonomic scope" value="Bacteria"/>
</dbReference>
<dbReference type="HOGENOM" id="CLU_001031_0_2_7"/>
<dbReference type="UniPathway" id="UPA00074">
    <property type="reaction ID" value="UER00128"/>
</dbReference>
<dbReference type="Proteomes" id="UP000002402">
    <property type="component" value="Chromosome"/>
</dbReference>
<dbReference type="GO" id="GO:0005737">
    <property type="term" value="C:cytoplasm"/>
    <property type="evidence" value="ECO:0007669"/>
    <property type="project" value="UniProtKB-SubCell"/>
</dbReference>
<dbReference type="GO" id="GO:0005524">
    <property type="term" value="F:ATP binding"/>
    <property type="evidence" value="ECO:0007669"/>
    <property type="project" value="UniProtKB-UniRule"/>
</dbReference>
<dbReference type="GO" id="GO:0046872">
    <property type="term" value="F:metal ion binding"/>
    <property type="evidence" value="ECO:0007669"/>
    <property type="project" value="UniProtKB-KW"/>
</dbReference>
<dbReference type="GO" id="GO:0004642">
    <property type="term" value="F:phosphoribosylformylglycinamidine synthase activity"/>
    <property type="evidence" value="ECO:0007669"/>
    <property type="project" value="UniProtKB-UniRule"/>
</dbReference>
<dbReference type="GO" id="GO:0006189">
    <property type="term" value="P:'de novo' IMP biosynthetic process"/>
    <property type="evidence" value="ECO:0007669"/>
    <property type="project" value="UniProtKB-UniRule"/>
</dbReference>
<dbReference type="CDD" id="cd01740">
    <property type="entry name" value="GATase1_FGAR_AT"/>
    <property type="match status" value="1"/>
</dbReference>
<dbReference type="CDD" id="cd02203">
    <property type="entry name" value="PurL_repeat1"/>
    <property type="match status" value="1"/>
</dbReference>
<dbReference type="CDD" id="cd02204">
    <property type="entry name" value="PurL_repeat2"/>
    <property type="match status" value="1"/>
</dbReference>
<dbReference type="FunFam" id="1.10.8.750:FF:000002">
    <property type="entry name" value="Phosphoribosylformylglycinamidine synthase"/>
    <property type="match status" value="1"/>
</dbReference>
<dbReference type="FunFam" id="3.30.1330.10:FF:000002">
    <property type="entry name" value="Phosphoribosylformylglycinamidine synthase"/>
    <property type="match status" value="1"/>
</dbReference>
<dbReference type="FunFam" id="3.30.1330.10:FF:000005">
    <property type="entry name" value="Phosphoribosylformylglycinamidine synthase"/>
    <property type="match status" value="1"/>
</dbReference>
<dbReference type="FunFam" id="3.40.50.880:FF:000008">
    <property type="entry name" value="Phosphoribosylformylglycinamidine synthase"/>
    <property type="match status" value="1"/>
</dbReference>
<dbReference type="FunFam" id="3.90.650.10:FF:000002">
    <property type="entry name" value="Phosphoribosylformylglycinamidine synthase"/>
    <property type="match status" value="1"/>
</dbReference>
<dbReference type="Gene3D" id="3.40.50.880">
    <property type="match status" value="1"/>
</dbReference>
<dbReference type="Gene3D" id="1.10.8.750">
    <property type="entry name" value="Phosphoribosylformylglycinamidine synthase, linker domain"/>
    <property type="match status" value="1"/>
</dbReference>
<dbReference type="Gene3D" id="3.90.650.10">
    <property type="entry name" value="PurM-like C-terminal domain"/>
    <property type="match status" value="2"/>
</dbReference>
<dbReference type="Gene3D" id="3.30.1330.10">
    <property type="entry name" value="PurM-like, N-terminal domain"/>
    <property type="match status" value="2"/>
</dbReference>
<dbReference type="HAMAP" id="MF_00419">
    <property type="entry name" value="PurL_1"/>
    <property type="match status" value="1"/>
</dbReference>
<dbReference type="InterPro" id="IPR029062">
    <property type="entry name" value="Class_I_gatase-like"/>
</dbReference>
<dbReference type="InterPro" id="IPR040707">
    <property type="entry name" value="FGAR-AT_N"/>
</dbReference>
<dbReference type="InterPro" id="IPR055181">
    <property type="entry name" value="FGAR-AT_PurM_N-like"/>
</dbReference>
<dbReference type="InterPro" id="IPR010073">
    <property type="entry name" value="PurL_large"/>
</dbReference>
<dbReference type="InterPro" id="IPR041609">
    <property type="entry name" value="PurL_linker"/>
</dbReference>
<dbReference type="InterPro" id="IPR010918">
    <property type="entry name" value="PurM-like_C_dom"/>
</dbReference>
<dbReference type="InterPro" id="IPR036676">
    <property type="entry name" value="PurM-like_C_sf"/>
</dbReference>
<dbReference type="InterPro" id="IPR036921">
    <property type="entry name" value="PurM-like_N_sf"/>
</dbReference>
<dbReference type="InterPro" id="IPR036604">
    <property type="entry name" value="PurS-like_sf"/>
</dbReference>
<dbReference type="NCBIfam" id="TIGR01735">
    <property type="entry name" value="FGAM_synt"/>
    <property type="match status" value="1"/>
</dbReference>
<dbReference type="NCBIfam" id="NF003672">
    <property type="entry name" value="PRK05297.1"/>
    <property type="match status" value="1"/>
</dbReference>
<dbReference type="PANTHER" id="PTHR10099">
    <property type="entry name" value="PHOSPHORIBOSYLFORMYLGLYCINAMIDINE SYNTHASE"/>
    <property type="match status" value="1"/>
</dbReference>
<dbReference type="PANTHER" id="PTHR10099:SF1">
    <property type="entry name" value="PHOSPHORIBOSYLFORMYLGLYCINAMIDINE SYNTHASE"/>
    <property type="match status" value="1"/>
</dbReference>
<dbReference type="Pfam" id="PF02769">
    <property type="entry name" value="AIRS_C"/>
    <property type="match status" value="2"/>
</dbReference>
<dbReference type="Pfam" id="PF18072">
    <property type="entry name" value="FGAR-AT_linker"/>
    <property type="match status" value="1"/>
</dbReference>
<dbReference type="Pfam" id="PF18076">
    <property type="entry name" value="FGAR-AT_N"/>
    <property type="match status" value="1"/>
</dbReference>
<dbReference type="Pfam" id="PF22689">
    <property type="entry name" value="FGAR-AT_PurM_N-like"/>
    <property type="match status" value="1"/>
</dbReference>
<dbReference type="Pfam" id="PF13507">
    <property type="entry name" value="GATase_5"/>
    <property type="match status" value="1"/>
</dbReference>
<dbReference type="SMART" id="SM01211">
    <property type="entry name" value="GATase_5"/>
    <property type="match status" value="1"/>
</dbReference>
<dbReference type="SUPFAM" id="SSF52317">
    <property type="entry name" value="Class I glutamine amidotransferase-like"/>
    <property type="match status" value="1"/>
</dbReference>
<dbReference type="SUPFAM" id="SSF109736">
    <property type="entry name" value="FGAM synthase PurL, linker domain"/>
    <property type="match status" value="1"/>
</dbReference>
<dbReference type="SUPFAM" id="SSF56042">
    <property type="entry name" value="PurM C-terminal domain-like"/>
    <property type="match status" value="2"/>
</dbReference>
<dbReference type="SUPFAM" id="SSF55326">
    <property type="entry name" value="PurM N-terminal domain-like"/>
    <property type="match status" value="2"/>
</dbReference>
<dbReference type="SUPFAM" id="SSF82697">
    <property type="entry name" value="PurS-like"/>
    <property type="match status" value="1"/>
</dbReference>
<dbReference type="PROSITE" id="PS51273">
    <property type="entry name" value="GATASE_TYPE_1"/>
    <property type="match status" value="1"/>
</dbReference>
<proteinExistence type="inferred from homology"/>
<sequence length="1299" mass="139228">MHTLRGAPALSDFRLAKLLAQCRERVPSVSSIYAEFVHLIDAPAPLSEADLATLGRLLDYGPRVATGARIGSLLLVLPRPGTISPWSSKATDIVHNCGLGERVRRMERGTAFFIAGPDGQALQDAELERLKPVLHDRMTQAVVGRLEDAAILFAGHTPRPFTTVDVLGGGRAALVTANRELGLALADDEMDYLVARFTELKRNPTDVELMMFAQANSEHCRHKIFNASWTIDGKPQERSLFQAIKNTYVQHKEGVLGAYKDNAAVIEGFEVDRFFPSPESGEWGSVREPAHIMIKVETHNHPTAISPYPGAATGAGGEIRDEGATGRGARPKAGLTGFSVSHLRIPGFEQPWEQPYGKPDRIVSALDIMVDGPLGGAAFNNEFGRPNLTGYFRSYEVQVPTPGGVEVRGYHKPIMIAGGLGNIRASHVQKGRLQPGDKLIVLGGPAMLIGLGGGAASSMAQGASAADLDFASVQRDNAEMERRCQEVIDSCWALGDKNPIRSIHDVGAGGLSNAVPELAHDNDLGGRLELRAVPNAEPGMSPVEIWCNEAQERYVLGVAPEDLARFAALCERERAPFSVLGDATAEQTLKLGDTQFGNAPIDLPMDVLFGKPPRMHRDVTSRPVSFAPLTLDGSLALLAERVLSHPTVADKSFLITIGDRTVSGLSSRDQMVGPWQVPVADCAVTLSTVTSTTGEAMAMGERTPLALIDAAASARMAVGEALTNIAAARIGKLSDVKLSANWMAAAGSPGEDASLYAAVHAVGMELCPALGLTIPVGKDSMSMRTVWEEGGARKAVTSPVSLIISAFAPVLDVRKSLTPQLVDVADDTRLLFIDLARGKQRLGGSVVAHVHGQVGPESPDVEDPALLRGFFAAVQALSESGSLLAYHDRSDGGLWATLCEMAFAGRCGLDVDLAPLGGDVTAALFNEELGAVVQVRASDVARVREVLAQHGLSRDVHELGRPVTALQVRVRHGGDTLMAEDTLALRRTWSRVSYEMQKLRDNPICADQESAARSDASDPGLSPKLTFDPAQDVAAPFIAKGARPRVAVLREQGVNSQQEMAAAFTRAGFAAVDVHMSDILSGRVSLEGFKGVLACGGFSYGDVLGAGGGWAKSILFNPRARDAFAAFFARPDSFGLGVCNGCQMMSQLKDIIPGAEHFPRFVRNASEQYEARLSLVEVSKTPSLFYQGMEGSRMLIVTSHGEGRAEFPSVEDAARVNGLGLVTTRWVDNHGRVAESYPANPNGSPHGIAGLTTRDGRFTITMPHPERVHRSVQHSWRPREWGDDGPWMRMFRNARVWLG</sequence>
<keyword id="KW-0067">ATP-binding</keyword>
<keyword id="KW-0963">Cytoplasm</keyword>
<keyword id="KW-0315">Glutamine amidotransferase</keyword>
<keyword id="KW-0436">Ligase</keyword>
<keyword id="KW-0460">Magnesium</keyword>
<keyword id="KW-0479">Metal-binding</keyword>
<keyword id="KW-0547">Nucleotide-binding</keyword>
<keyword id="KW-0658">Purine biosynthesis</keyword>
<keyword id="KW-1185">Reference proteome</keyword>
<accession>Q1D9V4</accession>
<reference key="1">
    <citation type="journal article" date="2006" name="Proc. Natl. Acad. Sci. U.S.A.">
        <title>Evolution of sensory complexity recorded in a myxobacterial genome.</title>
        <authorList>
            <person name="Goldman B.S."/>
            <person name="Nierman W.C."/>
            <person name="Kaiser D."/>
            <person name="Slater S.C."/>
            <person name="Durkin A.S."/>
            <person name="Eisen J.A."/>
            <person name="Ronning C.M."/>
            <person name="Barbazuk W.B."/>
            <person name="Blanchard M."/>
            <person name="Field C."/>
            <person name="Halling C."/>
            <person name="Hinkle G."/>
            <person name="Iartchuk O."/>
            <person name="Kim H.S."/>
            <person name="Mackenzie C."/>
            <person name="Madupu R."/>
            <person name="Miller N."/>
            <person name="Shvartsbeyn A."/>
            <person name="Sullivan S.A."/>
            <person name="Vaudin M."/>
            <person name="Wiegand R."/>
            <person name="Kaplan H.B."/>
        </authorList>
    </citation>
    <scope>NUCLEOTIDE SEQUENCE [LARGE SCALE GENOMIC DNA]</scope>
    <source>
        <strain>DK1622</strain>
    </source>
</reference>
<evidence type="ECO:0000255" key="1">
    <source>
        <dbReference type="HAMAP-Rule" id="MF_00419"/>
    </source>
</evidence>
<evidence type="ECO:0000305" key="2"/>
<gene>
    <name evidence="1" type="primary">purL</name>
    <name type="ordered locus">MXAN_2349</name>
</gene>
<name>PUR4_MYXXD</name>